<feature type="chain" id="PRO_1000201287" description="tRNA U34 carboxymethyltransferase">
    <location>
        <begin position="1"/>
        <end position="324"/>
    </location>
</feature>
<feature type="binding site" evidence="1">
    <location>
        <position position="91"/>
    </location>
    <ligand>
        <name>carboxy-S-adenosyl-L-methionine</name>
        <dbReference type="ChEBI" id="CHEBI:134278"/>
    </ligand>
</feature>
<feature type="binding site" evidence="1">
    <location>
        <position position="105"/>
    </location>
    <ligand>
        <name>carboxy-S-adenosyl-L-methionine</name>
        <dbReference type="ChEBI" id="CHEBI:134278"/>
    </ligand>
</feature>
<feature type="binding site" evidence="1">
    <location>
        <position position="110"/>
    </location>
    <ligand>
        <name>carboxy-S-adenosyl-L-methionine</name>
        <dbReference type="ChEBI" id="CHEBI:134278"/>
    </ligand>
</feature>
<feature type="binding site" evidence="1">
    <location>
        <position position="130"/>
    </location>
    <ligand>
        <name>carboxy-S-adenosyl-L-methionine</name>
        <dbReference type="ChEBI" id="CHEBI:134278"/>
    </ligand>
</feature>
<feature type="binding site" evidence="1">
    <location>
        <begin position="152"/>
        <end position="154"/>
    </location>
    <ligand>
        <name>carboxy-S-adenosyl-L-methionine</name>
        <dbReference type="ChEBI" id="CHEBI:134278"/>
    </ligand>
</feature>
<feature type="binding site" evidence="1">
    <location>
        <begin position="181"/>
        <end position="182"/>
    </location>
    <ligand>
        <name>carboxy-S-adenosyl-L-methionine</name>
        <dbReference type="ChEBI" id="CHEBI:134278"/>
    </ligand>
</feature>
<feature type="binding site" evidence="1">
    <location>
        <position position="196"/>
    </location>
    <ligand>
        <name>carboxy-S-adenosyl-L-methionine</name>
        <dbReference type="ChEBI" id="CHEBI:134278"/>
    </ligand>
</feature>
<feature type="binding site" evidence="1">
    <location>
        <position position="200"/>
    </location>
    <ligand>
        <name>carboxy-S-adenosyl-L-methionine</name>
        <dbReference type="ChEBI" id="CHEBI:134278"/>
    </ligand>
</feature>
<feature type="binding site" evidence="1">
    <location>
        <position position="315"/>
    </location>
    <ligand>
        <name>carboxy-S-adenosyl-L-methionine</name>
        <dbReference type="ChEBI" id="CHEBI:134278"/>
    </ligand>
</feature>
<organism>
    <name type="scientific">Aliivibrio salmonicida (strain LFI1238)</name>
    <name type="common">Vibrio salmonicida (strain LFI1238)</name>
    <dbReference type="NCBI Taxonomy" id="316275"/>
    <lineage>
        <taxon>Bacteria</taxon>
        <taxon>Pseudomonadati</taxon>
        <taxon>Pseudomonadota</taxon>
        <taxon>Gammaproteobacteria</taxon>
        <taxon>Vibrionales</taxon>
        <taxon>Vibrionaceae</taxon>
        <taxon>Aliivibrio</taxon>
    </lineage>
</organism>
<name>CMOB_ALISL</name>
<sequence length="324" mass="37077">MFNFANFYKLIAQDTILQPWLNTLPQQLTDWQNAEHGDIERWLKALKKIPEGCAENIDLKTSVTLSNNSPLIDGERKKLESLLRTFHPWRKGPFTVHDIHIDTEWRSDWKWDRVLPHLSPLKNRSILDVGCGNGYHMLRMLGEGARLCVGIDPSHLFLVQFEAIRKLMGNDQRAHLLPLGIEQLPELNAFDTVFSMGVLYHRRSPLDHLILLKNQLVAGGELVLETLVIDGDENAVLMPVDRYAQMRNVYFFPSAKALKVWLESVGFIDVKIVDECVTTTGEQRSTEWMKHNSLPEYLDPTDSSKTIEGHPAPKRAILIARKPD</sequence>
<dbReference type="EC" id="2.5.1.-" evidence="1"/>
<dbReference type="EMBL" id="FM178379">
    <property type="protein sequence ID" value="CAQ79569.1"/>
    <property type="molecule type" value="Genomic_DNA"/>
</dbReference>
<dbReference type="RefSeq" id="WP_012550459.1">
    <property type="nucleotide sequence ID" value="NC_011312.1"/>
</dbReference>
<dbReference type="SMR" id="B6EGI9"/>
<dbReference type="KEGG" id="vsa:VSAL_I1884"/>
<dbReference type="eggNOG" id="COG0500">
    <property type="taxonomic scope" value="Bacteria"/>
</dbReference>
<dbReference type="HOGENOM" id="CLU_052665_0_0_6"/>
<dbReference type="Proteomes" id="UP000001730">
    <property type="component" value="Chromosome 1"/>
</dbReference>
<dbReference type="GO" id="GO:0016765">
    <property type="term" value="F:transferase activity, transferring alkyl or aryl (other than methyl) groups"/>
    <property type="evidence" value="ECO:0007669"/>
    <property type="project" value="UniProtKB-UniRule"/>
</dbReference>
<dbReference type="GO" id="GO:0002098">
    <property type="term" value="P:tRNA wobble uridine modification"/>
    <property type="evidence" value="ECO:0007669"/>
    <property type="project" value="InterPro"/>
</dbReference>
<dbReference type="CDD" id="cd02440">
    <property type="entry name" value="AdoMet_MTases"/>
    <property type="match status" value="1"/>
</dbReference>
<dbReference type="Gene3D" id="3.40.50.150">
    <property type="entry name" value="Vaccinia Virus protein VP39"/>
    <property type="match status" value="1"/>
</dbReference>
<dbReference type="HAMAP" id="MF_01590">
    <property type="entry name" value="tRNA_carboxymethyltr_CmoB"/>
    <property type="match status" value="1"/>
</dbReference>
<dbReference type="InterPro" id="IPR010017">
    <property type="entry name" value="CmoB"/>
</dbReference>
<dbReference type="InterPro" id="IPR027555">
    <property type="entry name" value="Mo5U34_MeTrfas-like"/>
</dbReference>
<dbReference type="InterPro" id="IPR029063">
    <property type="entry name" value="SAM-dependent_MTases_sf"/>
</dbReference>
<dbReference type="NCBIfam" id="NF011650">
    <property type="entry name" value="PRK15068.1"/>
    <property type="match status" value="1"/>
</dbReference>
<dbReference type="NCBIfam" id="TIGR00452">
    <property type="entry name" value="tRNA 5-methoxyuridine(34)/uridine 5-oxyacetic acid(34) synthase CmoB"/>
    <property type="match status" value="1"/>
</dbReference>
<dbReference type="PANTHER" id="PTHR43861">
    <property type="entry name" value="TRANS-ACONITATE 2-METHYLTRANSFERASE-RELATED"/>
    <property type="match status" value="1"/>
</dbReference>
<dbReference type="Pfam" id="PF08003">
    <property type="entry name" value="Methyltransf_9"/>
    <property type="match status" value="1"/>
</dbReference>
<dbReference type="SUPFAM" id="SSF53335">
    <property type="entry name" value="S-adenosyl-L-methionine-dependent methyltransferases"/>
    <property type="match status" value="1"/>
</dbReference>
<keyword id="KW-0808">Transferase</keyword>
<keyword id="KW-0819">tRNA processing</keyword>
<protein>
    <recommendedName>
        <fullName evidence="1">tRNA U34 carboxymethyltransferase</fullName>
        <ecNumber evidence="1">2.5.1.-</ecNumber>
    </recommendedName>
</protein>
<comment type="function">
    <text evidence="1">Catalyzes carboxymethyl transfer from carboxy-S-adenosyl-L-methionine (Cx-SAM) to 5-hydroxyuridine (ho5U) to form 5-carboxymethoxyuridine (cmo5U) at position 34 in tRNAs.</text>
</comment>
<comment type="catalytic activity">
    <reaction evidence="1">
        <text>carboxy-S-adenosyl-L-methionine + 5-hydroxyuridine(34) in tRNA = 5-carboxymethoxyuridine(34) in tRNA + S-adenosyl-L-homocysteine + H(+)</text>
        <dbReference type="Rhea" id="RHEA:52848"/>
        <dbReference type="Rhea" id="RHEA-COMP:13381"/>
        <dbReference type="Rhea" id="RHEA-COMP:13383"/>
        <dbReference type="ChEBI" id="CHEBI:15378"/>
        <dbReference type="ChEBI" id="CHEBI:57856"/>
        <dbReference type="ChEBI" id="CHEBI:134278"/>
        <dbReference type="ChEBI" id="CHEBI:136877"/>
        <dbReference type="ChEBI" id="CHEBI:136879"/>
    </reaction>
</comment>
<comment type="subunit">
    <text evidence="1">Homotetramer.</text>
</comment>
<comment type="similarity">
    <text evidence="1">Belongs to the class I-like SAM-binding methyltransferase superfamily. CmoB family.</text>
</comment>
<gene>
    <name evidence="1" type="primary">cmoB</name>
    <name type="ordered locus">VSAL_I1884</name>
</gene>
<reference key="1">
    <citation type="journal article" date="2008" name="BMC Genomics">
        <title>The genome sequence of the fish pathogen Aliivibrio salmonicida strain LFI1238 shows extensive evidence of gene decay.</title>
        <authorList>
            <person name="Hjerde E."/>
            <person name="Lorentzen M.S."/>
            <person name="Holden M.T."/>
            <person name="Seeger K."/>
            <person name="Paulsen S."/>
            <person name="Bason N."/>
            <person name="Churcher C."/>
            <person name="Harris D."/>
            <person name="Norbertczak H."/>
            <person name="Quail M.A."/>
            <person name="Sanders S."/>
            <person name="Thurston S."/>
            <person name="Parkhill J."/>
            <person name="Willassen N.P."/>
            <person name="Thomson N.R."/>
        </authorList>
    </citation>
    <scope>NUCLEOTIDE SEQUENCE [LARGE SCALE GENOMIC DNA]</scope>
    <source>
        <strain>LFI1238</strain>
    </source>
</reference>
<evidence type="ECO:0000255" key="1">
    <source>
        <dbReference type="HAMAP-Rule" id="MF_01590"/>
    </source>
</evidence>
<accession>B6EGI9</accession>
<proteinExistence type="inferred from homology"/>